<gene>
    <name evidence="1" type="primary">nusB</name>
    <name type="ordered locus">jk1027</name>
</gene>
<sequence>MTEERTADNKAAKAASFKRHGSRYKARRRAVDILFEAEFRDIDPVEIVEERISLAKDSANQVKPVPEYTQQIVPGVATNLDALDEAIALHLSSDWQLDRLPAVDRAVLRVAAWELKFNDDVPPQVAVVEGVELASEYSHDKAPSYIHAVLDGINKDLQLQADLKIADASAAKRAEQAEQPGQAESDELDGLLDGVVQESDEA</sequence>
<evidence type="ECO:0000255" key="1">
    <source>
        <dbReference type="HAMAP-Rule" id="MF_00073"/>
    </source>
</evidence>
<evidence type="ECO:0000256" key="2">
    <source>
        <dbReference type="SAM" id="MobiDB-lite"/>
    </source>
</evidence>
<dbReference type="EMBL" id="CR931997">
    <property type="protein sequence ID" value="CAI37191.1"/>
    <property type="molecule type" value="Genomic_DNA"/>
</dbReference>
<dbReference type="RefSeq" id="WP_011273598.1">
    <property type="nucleotide sequence ID" value="NC_007164.1"/>
</dbReference>
<dbReference type="SMR" id="Q4JVG6"/>
<dbReference type="STRING" id="306537.jk1027"/>
<dbReference type="KEGG" id="cjk:jk1027"/>
<dbReference type="PATRIC" id="fig|306537.10.peg.1039"/>
<dbReference type="eggNOG" id="COG0781">
    <property type="taxonomic scope" value="Bacteria"/>
</dbReference>
<dbReference type="HOGENOM" id="CLU_087843_2_0_11"/>
<dbReference type="OrthoDB" id="3528057at2"/>
<dbReference type="Proteomes" id="UP000000545">
    <property type="component" value="Chromosome"/>
</dbReference>
<dbReference type="GO" id="GO:0005829">
    <property type="term" value="C:cytosol"/>
    <property type="evidence" value="ECO:0007669"/>
    <property type="project" value="TreeGrafter"/>
</dbReference>
<dbReference type="GO" id="GO:0003723">
    <property type="term" value="F:RNA binding"/>
    <property type="evidence" value="ECO:0007669"/>
    <property type="project" value="UniProtKB-UniRule"/>
</dbReference>
<dbReference type="GO" id="GO:0006353">
    <property type="term" value="P:DNA-templated transcription termination"/>
    <property type="evidence" value="ECO:0007669"/>
    <property type="project" value="UniProtKB-UniRule"/>
</dbReference>
<dbReference type="GO" id="GO:0031564">
    <property type="term" value="P:transcription antitermination"/>
    <property type="evidence" value="ECO:0007669"/>
    <property type="project" value="UniProtKB-KW"/>
</dbReference>
<dbReference type="Gene3D" id="1.10.940.10">
    <property type="entry name" value="NusB-like"/>
    <property type="match status" value="1"/>
</dbReference>
<dbReference type="HAMAP" id="MF_00073">
    <property type="entry name" value="NusB"/>
    <property type="match status" value="1"/>
</dbReference>
<dbReference type="InterPro" id="IPR035926">
    <property type="entry name" value="NusB-like_sf"/>
</dbReference>
<dbReference type="InterPro" id="IPR011605">
    <property type="entry name" value="NusB_fam"/>
</dbReference>
<dbReference type="InterPro" id="IPR006027">
    <property type="entry name" value="NusB_RsmB_TIM44"/>
</dbReference>
<dbReference type="NCBIfam" id="TIGR01951">
    <property type="entry name" value="nusB"/>
    <property type="match status" value="1"/>
</dbReference>
<dbReference type="PANTHER" id="PTHR11078:SF3">
    <property type="entry name" value="ANTITERMINATION NUSB DOMAIN-CONTAINING PROTEIN"/>
    <property type="match status" value="1"/>
</dbReference>
<dbReference type="PANTHER" id="PTHR11078">
    <property type="entry name" value="N UTILIZATION SUBSTANCE PROTEIN B-RELATED"/>
    <property type="match status" value="1"/>
</dbReference>
<dbReference type="Pfam" id="PF01029">
    <property type="entry name" value="NusB"/>
    <property type="match status" value="1"/>
</dbReference>
<dbReference type="SUPFAM" id="SSF48013">
    <property type="entry name" value="NusB-like"/>
    <property type="match status" value="1"/>
</dbReference>
<proteinExistence type="inferred from homology"/>
<protein>
    <recommendedName>
        <fullName evidence="1">Transcription antitermination protein NusB</fullName>
    </recommendedName>
    <alternativeName>
        <fullName evidence="1">Antitermination factor NusB</fullName>
    </alternativeName>
</protein>
<accession>Q4JVG6</accession>
<organism>
    <name type="scientific">Corynebacterium jeikeium (strain K411)</name>
    <dbReference type="NCBI Taxonomy" id="306537"/>
    <lineage>
        <taxon>Bacteria</taxon>
        <taxon>Bacillati</taxon>
        <taxon>Actinomycetota</taxon>
        <taxon>Actinomycetes</taxon>
        <taxon>Mycobacteriales</taxon>
        <taxon>Corynebacteriaceae</taxon>
        <taxon>Corynebacterium</taxon>
    </lineage>
</organism>
<comment type="function">
    <text evidence="1">Involved in transcription antitermination. Required for transcription of ribosomal RNA (rRNA) genes. Binds specifically to the boxA antiterminator sequence of the ribosomal RNA (rrn) operons.</text>
</comment>
<comment type="similarity">
    <text evidence="1">Belongs to the NusB family.</text>
</comment>
<feature type="chain" id="PRO_0000265510" description="Transcription antitermination protein NusB">
    <location>
        <begin position="1"/>
        <end position="202"/>
    </location>
</feature>
<feature type="region of interest" description="Disordered" evidence="2">
    <location>
        <begin position="1"/>
        <end position="21"/>
    </location>
</feature>
<feature type="region of interest" description="Disordered" evidence="2">
    <location>
        <begin position="169"/>
        <end position="202"/>
    </location>
</feature>
<feature type="compositionally biased region" description="Basic and acidic residues" evidence="2">
    <location>
        <begin position="1"/>
        <end position="11"/>
    </location>
</feature>
<keyword id="KW-1185">Reference proteome</keyword>
<keyword id="KW-0694">RNA-binding</keyword>
<keyword id="KW-0804">Transcription</keyword>
<keyword id="KW-0889">Transcription antitermination</keyword>
<keyword id="KW-0805">Transcription regulation</keyword>
<reference key="1">
    <citation type="journal article" date="2005" name="J. Bacteriol.">
        <title>Complete genome sequence and analysis of the multiresistant nosocomial pathogen Corynebacterium jeikeium K411, a lipid-requiring bacterium of the human skin flora.</title>
        <authorList>
            <person name="Tauch A."/>
            <person name="Kaiser O."/>
            <person name="Hain T."/>
            <person name="Goesmann A."/>
            <person name="Weisshaar B."/>
            <person name="Albersmeier A."/>
            <person name="Bekel T."/>
            <person name="Bischoff N."/>
            <person name="Brune I."/>
            <person name="Chakraborty T."/>
            <person name="Kalinowski J."/>
            <person name="Meyer F."/>
            <person name="Rupp O."/>
            <person name="Schneiker S."/>
            <person name="Viehoever P."/>
            <person name="Puehler A."/>
        </authorList>
    </citation>
    <scope>NUCLEOTIDE SEQUENCE [LARGE SCALE GENOMIC DNA]</scope>
    <source>
        <strain>K411</strain>
    </source>
</reference>
<name>NUSB_CORJK</name>